<gene>
    <name evidence="1" type="primary">rpsF</name>
    <name type="ordered locus">CPS_0415</name>
</gene>
<proteinExistence type="inferred from homology"/>
<dbReference type="EMBL" id="CP000083">
    <property type="protein sequence ID" value="AAZ28210.1"/>
    <property type="molecule type" value="Genomic_DNA"/>
</dbReference>
<dbReference type="RefSeq" id="WP_011041276.1">
    <property type="nucleotide sequence ID" value="NC_003910.7"/>
</dbReference>
<dbReference type="SMR" id="Q489U1"/>
<dbReference type="STRING" id="167879.CPS_0415"/>
<dbReference type="KEGG" id="cps:CPS_0415"/>
<dbReference type="eggNOG" id="COG0360">
    <property type="taxonomic scope" value="Bacteria"/>
</dbReference>
<dbReference type="HOGENOM" id="CLU_113441_6_1_6"/>
<dbReference type="Proteomes" id="UP000000547">
    <property type="component" value="Chromosome"/>
</dbReference>
<dbReference type="GO" id="GO:0022627">
    <property type="term" value="C:cytosolic small ribosomal subunit"/>
    <property type="evidence" value="ECO:0007669"/>
    <property type="project" value="TreeGrafter"/>
</dbReference>
<dbReference type="GO" id="GO:0070181">
    <property type="term" value="F:small ribosomal subunit rRNA binding"/>
    <property type="evidence" value="ECO:0007669"/>
    <property type="project" value="TreeGrafter"/>
</dbReference>
<dbReference type="GO" id="GO:0003735">
    <property type="term" value="F:structural constituent of ribosome"/>
    <property type="evidence" value="ECO:0007669"/>
    <property type="project" value="InterPro"/>
</dbReference>
<dbReference type="GO" id="GO:0006412">
    <property type="term" value="P:translation"/>
    <property type="evidence" value="ECO:0007669"/>
    <property type="project" value="UniProtKB-UniRule"/>
</dbReference>
<dbReference type="CDD" id="cd00473">
    <property type="entry name" value="bS6"/>
    <property type="match status" value="1"/>
</dbReference>
<dbReference type="FunFam" id="3.30.70.60:FF:000003">
    <property type="entry name" value="30S ribosomal protein S6"/>
    <property type="match status" value="1"/>
</dbReference>
<dbReference type="Gene3D" id="3.30.70.60">
    <property type="match status" value="1"/>
</dbReference>
<dbReference type="HAMAP" id="MF_00360">
    <property type="entry name" value="Ribosomal_bS6"/>
    <property type="match status" value="1"/>
</dbReference>
<dbReference type="InterPro" id="IPR000529">
    <property type="entry name" value="Ribosomal_bS6"/>
</dbReference>
<dbReference type="InterPro" id="IPR020815">
    <property type="entry name" value="Ribosomal_bS6_CS"/>
</dbReference>
<dbReference type="InterPro" id="IPR035980">
    <property type="entry name" value="Ribosomal_bS6_sf"/>
</dbReference>
<dbReference type="InterPro" id="IPR020814">
    <property type="entry name" value="Ribosomal_S6_plastid/chlpt"/>
</dbReference>
<dbReference type="InterPro" id="IPR014717">
    <property type="entry name" value="Transl_elong_EF1B/ribsomal_bS6"/>
</dbReference>
<dbReference type="NCBIfam" id="TIGR00166">
    <property type="entry name" value="S6"/>
    <property type="match status" value="1"/>
</dbReference>
<dbReference type="PANTHER" id="PTHR21011">
    <property type="entry name" value="MITOCHONDRIAL 28S RIBOSOMAL PROTEIN S6"/>
    <property type="match status" value="1"/>
</dbReference>
<dbReference type="PANTHER" id="PTHR21011:SF1">
    <property type="entry name" value="SMALL RIBOSOMAL SUBUNIT PROTEIN BS6M"/>
    <property type="match status" value="1"/>
</dbReference>
<dbReference type="Pfam" id="PF01250">
    <property type="entry name" value="Ribosomal_S6"/>
    <property type="match status" value="1"/>
</dbReference>
<dbReference type="SUPFAM" id="SSF54995">
    <property type="entry name" value="Ribosomal protein S6"/>
    <property type="match status" value="1"/>
</dbReference>
<dbReference type="PROSITE" id="PS01048">
    <property type="entry name" value="RIBOSOMAL_S6"/>
    <property type="match status" value="1"/>
</dbReference>
<keyword id="KW-0687">Ribonucleoprotein</keyword>
<keyword id="KW-0689">Ribosomal protein</keyword>
<keyword id="KW-0694">RNA-binding</keyword>
<keyword id="KW-0699">rRNA-binding</keyword>
<sequence>MRHYEIVFMVHPDQSEQVSGMIQRYTDLINAAEGKIHRLEDWGRRQLAYPINKLHKAHYVLMNIEAPQVVIDELETAFRYNDVVIRNMIMRTKDAVTEASPMAAAKEERRDDRREVKKDVAAAPVEAKEDSVEEKSEEAASEE</sequence>
<protein>
    <recommendedName>
        <fullName evidence="1">Small ribosomal subunit protein bS6</fullName>
    </recommendedName>
    <alternativeName>
        <fullName evidence="3">30S ribosomal protein S6</fullName>
    </alternativeName>
</protein>
<accession>Q489U1</accession>
<reference key="1">
    <citation type="journal article" date="2005" name="Proc. Natl. Acad. Sci. U.S.A.">
        <title>The psychrophilic lifestyle as revealed by the genome sequence of Colwellia psychrerythraea 34H through genomic and proteomic analyses.</title>
        <authorList>
            <person name="Methe B.A."/>
            <person name="Nelson K.E."/>
            <person name="Deming J.W."/>
            <person name="Momen B."/>
            <person name="Melamud E."/>
            <person name="Zhang X."/>
            <person name="Moult J."/>
            <person name="Madupu R."/>
            <person name="Nelson W.C."/>
            <person name="Dodson R.J."/>
            <person name="Brinkac L.M."/>
            <person name="Daugherty S.C."/>
            <person name="Durkin A.S."/>
            <person name="DeBoy R.T."/>
            <person name="Kolonay J.F."/>
            <person name="Sullivan S.A."/>
            <person name="Zhou L."/>
            <person name="Davidsen T.M."/>
            <person name="Wu M."/>
            <person name="Huston A.L."/>
            <person name="Lewis M."/>
            <person name="Weaver B."/>
            <person name="Weidman J.F."/>
            <person name="Khouri H."/>
            <person name="Utterback T.R."/>
            <person name="Feldblyum T.V."/>
            <person name="Fraser C.M."/>
        </authorList>
    </citation>
    <scope>NUCLEOTIDE SEQUENCE [LARGE SCALE GENOMIC DNA]</scope>
    <source>
        <strain>34H / ATCC BAA-681</strain>
    </source>
</reference>
<evidence type="ECO:0000255" key="1">
    <source>
        <dbReference type="HAMAP-Rule" id="MF_00360"/>
    </source>
</evidence>
<evidence type="ECO:0000256" key="2">
    <source>
        <dbReference type="SAM" id="MobiDB-lite"/>
    </source>
</evidence>
<evidence type="ECO:0000305" key="3"/>
<feature type="chain" id="PRO_0000229534" description="Small ribosomal subunit protein bS6">
    <location>
        <begin position="1"/>
        <end position="143"/>
    </location>
</feature>
<feature type="region of interest" description="Disordered" evidence="2">
    <location>
        <begin position="96"/>
        <end position="143"/>
    </location>
</feature>
<feature type="compositionally biased region" description="Basic and acidic residues" evidence="2">
    <location>
        <begin position="105"/>
        <end position="143"/>
    </location>
</feature>
<name>RS6_COLP3</name>
<organism>
    <name type="scientific">Colwellia psychrerythraea (strain 34H / ATCC BAA-681)</name>
    <name type="common">Vibrio psychroerythus</name>
    <dbReference type="NCBI Taxonomy" id="167879"/>
    <lineage>
        <taxon>Bacteria</taxon>
        <taxon>Pseudomonadati</taxon>
        <taxon>Pseudomonadota</taxon>
        <taxon>Gammaproteobacteria</taxon>
        <taxon>Alteromonadales</taxon>
        <taxon>Colwelliaceae</taxon>
        <taxon>Colwellia</taxon>
    </lineage>
</organism>
<comment type="function">
    <text evidence="1">Binds together with bS18 to 16S ribosomal RNA.</text>
</comment>
<comment type="similarity">
    <text evidence="1">Belongs to the bacterial ribosomal protein bS6 family.</text>
</comment>